<evidence type="ECO:0000255" key="1">
    <source>
        <dbReference type="HAMAP-Rule" id="MF_00416"/>
    </source>
</evidence>
<name>FLGI_YERPY</name>
<comment type="function">
    <text evidence="1">Assembles around the rod to form the L-ring and probably protects the motor/basal body from shearing forces during rotation.</text>
</comment>
<comment type="subunit">
    <text evidence="1">The basal body constitutes a major portion of the flagellar organelle and consists of four rings (L,P,S, and M) mounted on a central rod.</text>
</comment>
<comment type="subcellular location">
    <subcellularLocation>
        <location evidence="1">Periplasm</location>
    </subcellularLocation>
    <subcellularLocation>
        <location evidence="1">Bacterial flagellum basal body</location>
    </subcellularLocation>
</comment>
<comment type="similarity">
    <text evidence="1">Belongs to the FlgI family.</text>
</comment>
<dbReference type="EMBL" id="CP000950">
    <property type="protein sequence ID" value="ACA68695.1"/>
    <property type="molecule type" value="Genomic_DNA"/>
</dbReference>
<dbReference type="RefSeq" id="WP_002211117.1">
    <property type="nucleotide sequence ID" value="NZ_CP009792.1"/>
</dbReference>
<dbReference type="SMR" id="B1JP09"/>
<dbReference type="KEGG" id="ypy:YPK_2418"/>
<dbReference type="PATRIC" id="fig|502800.11.peg.3105"/>
<dbReference type="GO" id="GO:0009428">
    <property type="term" value="C:bacterial-type flagellum basal body, distal rod, P ring"/>
    <property type="evidence" value="ECO:0007669"/>
    <property type="project" value="InterPro"/>
</dbReference>
<dbReference type="GO" id="GO:0030288">
    <property type="term" value="C:outer membrane-bounded periplasmic space"/>
    <property type="evidence" value="ECO:0007669"/>
    <property type="project" value="InterPro"/>
</dbReference>
<dbReference type="GO" id="GO:0005198">
    <property type="term" value="F:structural molecule activity"/>
    <property type="evidence" value="ECO:0007669"/>
    <property type="project" value="InterPro"/>
</dbReference>
<dbReference type="GO" id="GO:0071973">
    <property type="term" value="P:bacterial-type flagellum-dependent cell motility"/>
    <property type="evidence" value="ECO:0007669"/>
    <property type="project" value="InterPro"/>
</dbReference>
<dbReference type="HAMAP" id="MF_00416">
    <property type="entry name" value="FlgI"/>
    <property type="match status" value="1"/>
</dbReference>
<dbReference type="InterPro" id="IPR001782">
    <property type="entry name" value="Flag_FlgI"/>
</dbReference>
<dbReference type="NCBIfam" id="NF003676">
    <property type="entry name" value="PRK05303.1"/>
    <property type="match status" value="1"/>
</dbReference>
<dbReference type="PANTHER" id="PTHR30381">
    <property type="entry name" value="FLAGELLAR P-RING PERIPLASMIC PROTEIN FLGI"/>
    <property type="match status" value="1"/>
</dbReference>
<dbReference type="PANTHER" id="PTHR30381:SF0">
    <property type="entry name" value="FLAGELLAR P-RING PROTEIN"/>
    <property type="match status" value="1"/>
</dbReference>
<dbReference type="Pfam" id="PF02119">
    <property type="entry name" value="FlgI"/>
    <property type="match status" value="1"/>
</dbReference>
<dbReference type="PRINTS" id="PR01010">
    <property type="entry name" value="FLGPRINGFLGI"/>
</dbReference>
<accession>B1JP09</accession>
<gene>
    <name evidence="1" type="primary">flgI</name>
    <name type="ordered locus">YPK_2418</name>
</gene>
<sequence length="369" mass="38464">MRKQSLVTLLMVLLSLVWLPASAERIRDLVTVQGVRDNALIGYGLVVGLDGSGDQTMQTPFTTQSLSNMLSQLGITVPPGTNMQLKNVAAVMVTAKLPAFSRAGQTIDVVVSSMGNAKSIRGGTLLMTPLKGVDNQVYALAQGNVLVGGAGAAAGGSSVQVNQLAGGRISNGATIERELPTTFGTDGIINLQLNSEDFTLAQQVSDAINRQRGFGSATAIDARTIQVLVPRGGSSQVRFLADIQNIPINVDPGDAKVIINSRTGSVVMNRNVVLDSCAVAQGNLSVVVDKQNIVSQPDTPFGGGQTVVTPNTQISVQQQGGVLQRVNASPNLNNVVRALNSLGATPIDLMSILQAMESAGCLRAKLEII</sequence>
<organism>
    <name type="scientific">Yersinia pseudotuberculosis serotype O:3 (strain YPIII)</name>
    <dbReference type="NCBI Taxonomy" id="502800"/>
    <lineage>
        <taxon>Bacteria</taxon>
        <taxon>Pseudomonadati</taxon>
        <taxon>Pseudomonadota</taxon>
        <taxon>Gammaproteobacteria</taxon>
        <taxon>Enterobacterales</taxon>
        <taxon>Yersiniaceae</taxon>
        <taxon>Yersinia</taxon>
    </lineage>
</organism>
<protein>
    <recommendedName>
        <fullName evidence="1">Flagellar P-ring protein</fullName>
    </recommendedName>
    <alternativeName>
        <fullName evidence="1">Basal body P-ring protein</fullName>
    </alternativeName>
</protein>
<feature type="signal peptide" evidence="1">
    <location>
        <begin position="1"/>
        <end position="23"/>
    </location>
</feature>
<feature type="chain" id="PRO_5000316043" description="Flagellar P-ring protein">
    <location>
        <begin position="24"/>
        <end position="369"/>
    </location>
</feature>
<proteinExistence type="inferred from homology"/>
<keyword id="KW-0975">Bacterial flagellum</keyword>
<keyword id="KW-0574">Periplasm</keyword>
<keyword id="KW-0732">Signal</keyword>
<reference key="1">
    <citation type="submission" date="2008-02" db="EMBL/GenBank/DDBJ databases">
        <title>Complete sequence of Yersinia pseudotuberculosis YPIII.</title>
        <authorList>
            <consortium name="US DOE Joint Genome Institute"/>
            <person name="Copeland A."/>
            <person name="Lucas S."/>
            <person name="Lapidus A."/>
            <person name="Glavina del Rio T."/>
            <person name="Dalin E."/>
            <person name="Tice H."/>
            <person name="Bruce D."/>
            <person name="Goodwin L."/>
            <person name="Pitluck S."/>
            <person name="Munk A.C."/>
            <person name="Brettin T."/>
            <person name="Detter J.C."/>
            <person name="Han C."/>
            <person name="Tapia R."/>
            <person name="Schmutz J."/>
            <person name="Larimer F."/>
            <person name="Land M."/>
            <person name="Hauser L."/>
            <person name="Challacombe J.F."/>
            <person name="Green L."/>
            <person name="Lindler L.E."/>
            <person name="Nikolich M.P."/>
            <person name="Richardson P."/>
        </authorList>
    </citation>
    <scope>NUCLEOTIDE SEQUENCE [LARGE SCALE GENOMIC DNA]</scope>
    <source>
        <strain>YPIII</strain>
    </source>
</reference>